<dbReference type="EC" id="2.7.1.107" evidence="1"/>
<dbReference type="EMBL" id="AM295250">
    <property type="protein sequence ID" value="CAL28375.1"/>
    <property type="molecule type" value="Genomic_DNA"/>
</dbReference>
<dbReference type="RefSeq" id="WP_015900715.1">
    <property type="nucleotide sequence ID" value="NC_012121.1"/>
</dbReference>
<dbReference type="SMR" id="B9DMT6"/>
<dbReference type="GeneID" id="93793925"/>
<dbReference type="KEGG" id="sca:SCA_1470"/>
<dbReference type="eggNOG" id="COG1597">
    <property type="taxonomic scope" value="Bacteria"/>
</dbReference>
<dbReference type="HOGENOM" id="CLU_045532_1_0_9"/>
<dbReference type="OrthoDB" id="142078at2"/>
<dbReference type="BioCyc" id="SCAR396513:SCA_RS07475-MONOMER"/>
<dbReference type="Proteomes" id="UP000000444">
    <property type="component" value="Chromosome"/>
</dbReference>
<dbReference type="GO" id="GO:0005886">
    <property type="term" value="C:plasma membrane"/>
    <property type="evidence" value="ECO:0007669"/>
    <property type="project" value="TreeGrafter"/>
</dbReference>
<dbReference type="GO" id="GO:0005524">
    <property type="term" value="F:ATP binding"/>
    <property type="evidence" value="ECO:0007669"/>
    <property type="project" value="UniProtKB-KW"/>
</dbReference>
<dbReference type="GO" id="GO:0004143">
    <property type="term" value="F:ATP-dependent diacylglycerol kinase activity"/>
    <property type="evidence" value="ECO:0007669"/>
    <property type="project" value="UniProtKB-EC"/>
</dbReference>
<dbReference type="GO" id="GO:0046872">
    <property type="term" value="F:metal ion binding"/>
    <property type="evidence" value="ECO:0007669"/>
    <property type="project" value="UniProtKB-KW"/>
</dbReference>
<dbReference type="GO" id="GO:0008654">
    <property type="term" value="P:phospholipid biosynthetic process"/>
    <property type="evidence" value="ECO:0007669"/>
    <property type="project" value="UniProtKB-KW"/>
</dbReference>
<dbReference type="FunFam" id="2.60.200.40:FF:000015">
    <property type="entry name" value="Diacylglycerol kinase"/>
    <property type="match status" value="1"/>
</dbReference>
<dbReference type="FunFam" id="3.40.50.10330:FF:000008">
    <property type="entry name" value="Probable lipid kinase YegS"/>
    <property type="match status" value="1"/>
</dbReference>
<dbReference type="Gene3D" id="2.60.200.40">
    <property type="match status" value="1"/>
</dbReference>
<dbReference type="Gene3D" id="3.40.50.10330">
    <property type="entry name" value="Probable inorganic polyphosphate/atp-NAD kinase, domain 1"/>
    <property type="match status" value="1"/>
</dbReference>
<dbReference type="InterPro" id="IPR017438">
    <property type="entry name" value="ATP-NAD_kinase_N"/>
</dbReference>
<dbReference type="InterPro" id="IPR005218">
    <property type="entry name" value="Diacylglycerol/lipid_kinase"/>
</dbReference>
<dbReference type="InterPro" id="IPR001206">
    <property type="entry name" value="Diacylglycerol_kinase_cat_dom"/>
</dbReference>
<dbReference type="InterPro" id="IPR050187">
    <property type="entry name" value="Lipid_Phosphate_FormReg"/>
</dbReference>
<dbReference type="InterPro" id="IPR016064">
    <property type="entry name" value="NAD/diacylglycerol_kinase_sf"/>
</dbReference>
<dbReference type="InterPro" id="IPR045540">
    <property type="entry name" value="YegS/DAGK_C"/>
</dbReference>
<dbReference type="NCBIfam" id="NF009603">
    <property type="entry name" value="PRK13055.1"/>
    <property type="match status" value="1"/>
</dbReference>
<dbReference type="NCBIfam" id="NF009874">
    <property type="entry name" value="PRK13337.1"/>
    <property type="match status" value="1"/>
</dbReference>
<dbReference type="NCBIfam" id="TIGR00147">
    <property type="entry name" value="YegS/Rv2252/BmrU family lipid kinase"/>
    <property type="match status" value="1"/>
</dbReference>
<dbReference type="PANTHER" id="PTHR12358:SF106">
    <property type="entry name" value="LIPID KINASE YEGS"/>
    <property type="match status" value="1"/>
</dbReference>
<dbReference type="PANTHER" id="PTHR12358">
    <property type="entry name" value="SPHINGOSINE KINASE"/>
    <property type="match status" value="1"/>
</dbReference>
<dbReference type="Pfam" id="PF00781">
    <property type="entry name" value="DAGK_cat"/>
    <property type="match status" value="1"/>
</dbReference>
<dbReference type="Pfam" id="PF19279">
    <property type="entry name" value="YegS_C"/>
    <property type="match status" value="1"/>
</dbReference>
<dbReference type="SMART" id="SM00046">
    <property type="entry name" value="DAGKc"/>
    <property type="match status" value="1"/>
</dbReference>
<dbReference type="SUPFAM" id="SSF111331">
    <property type="entry name" value="NAD kinase/diacylglycerol kinase-like"/>
    <property type="match status" value="1"/>
</dbReference>
<dbReference type="PROSITE" id="PS50146">
    <property type="entry name" value="DAGK"/>
    <property type="match status" value="1"/>
</dbReference>
<name>DAGK_STACT</name>
<organism>
    <name type="scientific">Staphylococcus carnosus (strain TM300)</name>
    <dbReference type="NCBI Taxonomy" id="396513"/>
    <lineage>
        <taxon>Bacteria</taxon>
        <taxon>Bacillati</taxon>
        <taxon>Bacillota</taxon>
        <taxon>Bacilli</taxon>
        <taxon>Bacillales</taxon>
        <taxon>Staphylococcaceae</taxon>
        <taxon>Staphylococcus</taxon>
    </lineage>
</organism>
<comment type="function">
    <text evidence="1">Catalyzes the phosphorylation of diacylglycerol (DAG) into phosphatidic acid. Is a key enzyme involved in the production of lipoteichoic acid by reintroducing DAG formed from the breakdown of membrane phospholipids into the phosphatidylglycerol biosynthetic pathway.</text>
</comment>
<comment type="catalytic activity">
    <reaction evidence="1">
        <text>a 1,2-diacyl-sn-glycerol + ATP = a 1,2-diacyl-sn-glycero-3-phosphate + ADP + H(+)</text>
        <dbReference type="Rhea" id="RHEA:10272"/>
        <dbReference type="ChEBI" id="CHEBI:15378"/>
        <dbReference type="ChEBI" id="CHEBI:17815"/>
        <dbReference type="ChEBI" id="CHEBI:30616"/>
        <dbReference type="ChEBI" id="CHEBI:58608"/>
        <dbReference type="ChEBI" id="CHEBI:456216"/>
        <dbReference type="EC" id="2.7.1.107"/>
    </reaction>
</comment>
<comment type="cofactor">
    <cofactor evidence="1">
        <name>Mg(2+)</name>
        <dbReference type="ChEBI" id="CHEBI:18420"/>
    </cofactor>
    <text evidence="1">Binds 1 Mg(2+) ion per subunit. This ion appears to have a structural role and is required for catalytic activity.</text>
</comment>
<comment type="subunit">
    <text evidence="1">Homodimer.</text>
</comment>
<comment type="similarity">
    <text evidence="3">Belongs to the diacylglycerol/lipid kinase family.</text>
</comment>
<proteinExistence type="inferred from homology"/>
<gene>
    <name type="primary">dagK</name>
    <name type="ordered locus">Sca_1470</name>
</gene>
<protein>
    <recommendedName>
        <fullName>Diacylglycerol kinase</fullName>
        <shortName>DAG kinase</shortName>
        <shortName>DAGK</shortName>
        <ecNumber evidence="1">2.7.1.107</ecNumber>
    </recommendedName>
</protein>
<reference key="1">
    <citation type="journal article" date="2009" name="Appl. Environ. Microbiol.">
        <title>Genome analysis of the meat starter culture bacterium Staphylococcus carnosus TM300.</title>
        <authorList>
            <person name="Rosenstein R."/>
            <person name="Nerz C."/>
            <person name="Biswas L."/>
            <person name="Resch A."/>
            <person name="Raddatz G."/>
            <person name="Schuster S.C."/>
            <person name="Goetz F."/>
        </authorList>
    </citation>
    <scope>NUCLEOTIDE SEQUENCE [LARGE SCALE GENOMIC DNA]</scope>
    <source>
        <strain>TM300</strain>
    </source>
</reference>
<sequence length="306" mass="34082">MRKRARIIYNPTSGKELFKRMLPEVLVKMEKAGFETSAYATQKAGDATIESKRALQEDYEMLIVAGGDGTLNEVVNGIAEHPKRPKIGVIPMGTVNDFGRALHLPTDILKAVDVIIEGHSVKVDIGKMNSRYFINLAAGGRITEVSYETSSKLKTFVGPFAYYIKGMEMLPQMTNVDVRIEYDGQVFQGEILLFLLGLTNSMAGFEKLVPDARLDDGYFTLIIVQKANLAELGHIMTLASRGEHIKHPKVIYEKAKSVNISSFEQMPLNVDGEYGGQLPANFLNLKQHIEVYTPKDVKNTELIQQD</sequence>
<accession>B9DMT6</accession>
<evidence type="ECO:0000250" key="1">
    <source>
        <dbReference type="UniProtKB" id="Q6GFF9"/>
    </source>
</evidence>
<evidence type="ECO:0000255" key="2">
    <source>
        <dbReference type="PROSITE-ProRule" id="PRU00783"/>
    </source>
</evidence>
<evidence type="ECO:0000305" key="3"/>
<feature type="chain" id="PRO_0000386499" description="Diacylglycerol kinase">
    <location>
        <begin position="1"/>
        <end position="306"/>
    </location>
</feature>
<feature type="domain" description="DAGKc" evidence="2">
    <location>
        <begin position="1"/>
        <end position="132"/>
    </location>
</feature>
<feature type="active site" description="Proton acceptor" evidence="1">
    <location>
        <position position="273"/>
    </location>
</feature>
<feature type="binding site" evidence="2">
    <location>
        <begin position="10"/>
        <end position="14"/>
    </location>
    <ligand>
        <name>ATP</name>
        <dbReference type="ChEBI" id="CHEBI:30616"/>
    </ligand>
</feature>
<feature type="binding site" evidence="2">
    <location>
        <position position="41"/>
    </location>
    <ligand>
        <name>ATP</name>
        <dbReference type="ChEBI" id="CHEBI:30616"/>
    </ligand>
</feature>
<feature type="binding site" evidence="2">
    <location>
        <begin position="67"/>
        <end position="73"/>
    </location>
    <ligand>
        <name>ATP</name>
        <dbReference type="ChEBI" id="CHEBI:30616"/>
    </ligand>
</feature>
<feature type="binding site" evidence="2">
    <location>
        <position position="94"/>
    </location>
    <ligand>
        <name>ATP</name>
        <dbReference type="ChEBI" id="CHEBI:30616"/>
    </ligand>
</feature>
<feature type="binding site" evidence="1">
    <location>
        <position position="213"/>
    </location>
    <ligand>
        <name>Mg(2+)</name>
        <dbReference type="ChEBI" id="CHEBI:18420"/>
    </ligand>
</feature>
<feature type="binding site" evidence="1">
    <location>
        <position position="216"/>
    </location>
    <ligand>
        <name>Mg(2+)</name>
        <dbReference type="ChEBI" id="CHEBI:18420"/>
    </ligand>
</feature>
<feature type="binding site" evidence="1">
    <location>
        <position position="218"/>
    </location>
    <ligand>
        <name>Mg(2+)</name>
        <dbReference type="ChEBI" id="CHEBI:18420"/>
    </ligand>
</feature>
<keyword id="KW-0067">ATP-binding</keyword>
<keyword id="KW-0418">Kinase</keyword>
<keyword id="KW-0444">Lipid biosynthesis</keyword>
<keyword id="KW-0443">Lipid metabolism</keyword>
<keyword id="KW-0460">Magnesium</keyword>
<keyword id="KW-0479">Metal-binding</keyword>
<keyword id="KW-0547">Nucleotide-binding</keyword>
<keyword id="KW-0594">Phospholipid biosynthesis</keyword>
<keyword id="KW-1208">Phospholipid metabolism</keyword>
<keyword id="KW-1185">Reference proteome</keyword>
<keyword id="KW-0808">Transferase</keyword>